<sequence>MGQKVNPVGFRLGVNRGWDSVWYAKKKDFGNYLIEDFKIRAYIKKNVVNSGVSKVMIERTSNKCFVTIYTSRPGFVIGKKGSDIDKIKNNLSKFTNNEVTLNIKEVKKPETNAYLVAENIAQQLVKRISYRRAMKRAMQSCLRLGAKGIKVSISGRLGGNEIARTEWLREGSIPSHTLRADIDYAEAEALTTFGIIGIKIWIYKGEVFAKEFSQETNKIVPKEVKE</sequence>
<proteinExistence type="inferred from homology"/>
<accession>Q4FLM4</accession>
<evidence type="ECO:0000255" key="1">
    <source>
        <dbReference type="HAMAP-Rule" id="MF_01309"/>
    </source>
</evidence>
<evidence type="ECO:0000305" key="2"/>
<name>RS3_PELUB</name>
<keyword id="KW-1185">Reference proteome</keyword>
<keyword id="KW-0687">Ribonucleoprotein</keyword>
<keyword id="KW-0689">Ribosomal protein</keyword>
<keyword id="KW-0694">RNA-binding</keyword>
<keyword id="KW-0699">rRNA-binding</keyword>
<reference key="1">
    <citation type="journal article" date="2005" name="Science">
        <title>Genome streamlining in a cosmopolitan oceanic bacterium.</title>
        <authorList>
            <person name="Giovannoni S.J."/>
            <person name="Tripp H.J."/>
            <person name="Givan S."/>
            <person name="Podar M."/>
            <person name="Vergin K.L."/>
            <person name="Baptista D."/>
            <person name="Bibbs L."/>
            <person name="Eads J."/>
            <person name="Richardson T.H."/>
            <person name="Noordewier M."/>
            <person name="Rappe M.S."/>
            <person name="Short J.M."/>
            <person name="Carrington J.C."/>
            <person name="Mathur E.J."/>
        </authorList>
    </citation>
    <scope>NUCLEOTIDE SEQUENCE [LARGE SCALE GENOMIC DNA]</scope>
    <source>
        <strain>HTCC1062</strain>
    </source>
</reference>
<gene>
    <name evidence="1" type="primary">rpsC</name>
    <name type="ordered locus">SAR11_1111</name>
</gene>
<protein>
    <recommendedName>
        <fullName evidence="1">Small ribosomal subunit protein uS3</fullName>
    </recommendedName>
    <alternativeName>
        <fullName evidence="2">30S ribosomal protein S3</fullName>
    </alternativeName>
</protein>
<feature type="chain" id="PRO_0000230710" description="Small ribosomal subunit protein uS3">
    <location>
        <begin position="1"/>
        <end position="226"/>
    </location>
</feature>
<feature type="domain" description="KH type-2" evidence="1">
    <location>
        <begin position="39"/>
        <end position="107"/>
    </location>
</feature>
<comment type="function">
    <text evidence="1">Binds the lower part of the 30S subunit head. Binds mRNA in the 70S ribosome, positioning it for translation.</text>
</comment>
<comment type="subunit">
    <text evidence="1">Part of the 30S ribosomal subunit. Forms a tight complex with proteins S10 and S14.</text>
</comment>
<comment type="similarity">
    <text evidence="1">Belongs to the universal ribosomal protein uS3 family.</text>
</comment>
<dbReference type="EMBL" id="CP000084">
    <property type="protein sequence ID" value="AAZ21914.1"/>
    <property type="molecule type" value="Genomic_DNA"/>
</dbReference>
<dbReference type="RefSeq" id="WP_011282155.1">
    <property type="nucleotide sequence ID" value="NC_007205.1"/>
</dbReference>
<dbReference type="SMR" id="Q4FLM4"/>
<dbReference type="STRING" id="335992.SAR11_1111"/>
<dbReference type="GeneID" id="66295600"/>
<dbReference type="KEGG" id="pub:SAR11_1111"/>
<dbReference type="eggNOG" id="COG0092">
    <property type="taxonomic scope" value="Bacteria"/>
</dbReference>
<dbReference type="HOGENOM" id="CLU_058591_0_2_5"/>
<dbReference type="OrthoDB" id="9806396at2"/>
<dbReference type="Proteomes" id="UP000002528">
    <property type="component" value="Chromosome"/>
</dbReference>
<dbReference type="GO" id="GO:0022627">
    <property type="term" value="C:cytosolic small ribosomal subunit"/>
    <property type="evidence" value="ECO:0007669"/>
    <property type="project" value="TreeGrafter"/>
</dbReference>
<dbReference type="GO" id="GO:0003729">
    <property type="term" value="F:mRNA binding"/>
    <property type="evidence" value="ECO:0007669"/>
    <property type="project" value="UniProtKB-UniRule"/>
</dbReference>
<dbReference type="GO" id="GO:0019843">
    <property type="term" value="F:rRNA binding"/>
    <property type="evidence" value="ECO:0007669"/>
    <property type="project" value="UniProtKB-UniRule"/>
</dbReference>
<dbReference type="GO" id="GO:0003735">
    <property type="term" value="F:structural constituent of ribosome"/>
    <property type="evidence" value="ECO:0007669"/>
    <property type="project" value="InterPro"/>
</dbReference>
<dbReference type="GO" id="GO:0006412">
    <property type="term" value="P:translation"/>
    <property type="evidence" value="ECO:0007669"/>
    <property type="project" value="UniProtKB-UniRule"/>
</dbReference>
<dbReference type="CDD" id="cd02412">
    <property type="entry name" value="KH-II_30S_S3"/>
    <property type="match status" value="1"/>
</dbReference>
<dbReference type="FunFam" id="3.30.300.20:FF:000001">
    <property type="entry name" value="30S ribosomal protein S3"/>
    <property type="match status" value="1"/>
</dbReference>
<dbReference type="Gene3D" id="3.30.300.20">
    <property type="match status" value="1"/>
</dbReference>
<dbReference type="Gene3D" id="3.30.1140.32">
    <property type="entry name" value="Ribosomal protein S3, C-terminal domain"/>
    <property type="match status" value="1"/>
</dbReference>
<dbReference type="HAMAP" id="MF_01309_B">
    <property type="entry name" value="Ribosomal_uS3_B"/>
    <property type="match status" value="1"/>
</dbReference>
<dbReference type="InterPro" id="IPR004087">
    <property type="entry name" value="KH_dom"/>
</dbReference>
<dbReference type="InterPro" id="IPR015946">
    <property type="entry name" value="KH_dom-like_a/b"/>
</dbReference>
<dbReference type="InterPro" id="IPR004044">
    <property type="entry name" value="KH_dom_type_2"/>
</dbReference>
<dbReference type="InterPro" id="IPR009019">
    <property type="entry name" value="KH_sf_prok-type"/>
</dbReference>
<dbReference type="InterPro" id="IPR036419">
    <property type="entry name" value="Ribosomal_S3_C_sf"/>
</dbReference>
<dbReference type="InterPro" id="IPR005704">
    <property type="entry name" value="Ribosomal_uS3_bac-typ"/>
</dbReference>
<dbReference type="InterPro" id="IPR001351">
    <property type="entry name" value="Ribosomal_uS3_C"/>
</dbReference>
<dbReference type="InterPro" id="IPR018280">
    <property type="entry name" value="Ribosomal_uS3_CS"/>
</dbReference>
<dbReference type="NCBIfam" id="TIGR01009">
    <property type="entry name" value="rpsC_bact"/>
    <property type="match status" value="1"/>
</dbReference>
<dbReference type="PANTHER" id="PTHR11760">
    <property type="entry name" value="30S/40S RIBOSOMAL PROTEIN S3"/>
    <property type="match status" value="1"/>
</dbReference>
<dbReference type="PANTHER" id="PTHR11760:SF19">
    <property type="entry name" value="SMALL RIBOSOMAL SUBUNIT PROTEIN US3C"/>
    <property type="match status" value="1"/>
</dbReference>
<dbReference type="Pfam" id="PF07650">
    <property type="entry name" value="KH_2"/>
    <property type="match status" value="1"/>
</dbReference>
<dbReference type="Pfam" id="PF00189">
    <property type="entry name" value="Ribosomal_S3_C"/>
    <property type="match status" value="1"/>
</dbReference>
<dbReference type="SMART" id="SM00322">
    <property type="entry name" value="KH"/>
    <property type="match status" value="1"/>
</dbReference>
<dbReference type="SUPFAM" id="SSF54814">
    <property type="entry name" value="Prokaryotic type KH domain (KH-domain type II)"/>
    <property type="match status" value="1"/>
</dbReference>
<dbReference type="SUPFAM" id="SSF54821">
    <property type="entry name" value="Ribosomal protein S3 C-terminal domain"/>
    <property type="match status" value="1"/>
</dbReference>
<dbReference type="PROSITE" id="PS50823">
    <property type="entry name" value="KH_TYPE_2"/>
    <property type="match status" value="1"/>
</dbReference>
<dbReference type="PROSITE" id="PS00548">
    <property type="entry name" value="RIBOSOMAL_S3"/>
    <property type="match status" value="1"/>
</dbReference>
<organism>
    <name type="scientific">Pelagibacter ubique (strain HTCC1062)</name>
    <dbReference type="NCBI Taxonomy" id="335992"/>
    <lineage>
        <taxon>Bacteria</taxon>
        <taxon>Pseudomonadati</taxon>
        <taxon>Pseudomonadota</taxon>
        <taxon>Alphaproteobacteria</taxon>
        <taxon>Candidatus Pelagibacterales</taxon>
        <taxon>Candidatus Pelagibacteraceae</taxon>
        <taxon>Candidatus Pelagibacter</taxon>
    </lineage>
</organism>